<accession>A7GG79</accession>
<name>COAD_CLOBL</name>
<dbReference type="EC" id="2.7.7.3" evidence="1"/>
<dbReference type="EMBL" id="CP000728">
    <property type="protein sequence ID" value="ABS41810.1"/>
    <property type="molecule type" value="Genomic_DNA"/>
</dbReference>
<dbReference type="RefSeq" id="WP_012100414.1">
    <property type="nucleotide sequence ID" value="NC_009699.1"/>
</dbReference>
<dbReference type="SMR" id="A7GG79"/>
<dbReference type="KEGG" id="cbf:CLI_2554"/>
<dbReference type="HOGENOM" id="CLU_100149_0_1_9"/>
<dbReference type="UniPathway" id="UPA00241">
    <property type="reaction ID" value="UER00355"/>
</dbReference>
<dbReference type="Proteomes" id="UP000002410">
    <property type="component" value="Chromosome"/>
</dbReference>
<dbReference type="GO" id="GO:0005737">
    <property type="term" value="C:cytoplasm"/>
    <property type="evidence" value="ECO:0007669"/>
    <property type="project" value="UniProtKB-SubCell"/>
</dbReference>
<dbReference type="GO" id="GO:0005524">
    <property type="term" value="F:ATP binding"/>
    <property type="evidence" value="ECO:0007669"/>
    <property type="project" value="UniProtKB-KW"/>
</dbReference>
<dbReference type="GO" id="GO:0004595">
    <property type="term" value="F:pantetheine-phosphate adenylyltransferase activity"/>
    <property type="evidence" value="ECO:0007669"/>
    <property type="project" value="UniProtKB-UniRule"/>
</dbReference>
<dbReference type="GO" id="GO:0015937">
    <property type="term" value="P:coenzyme A biosynthetic process"/>
    <property type="evidence" value="ECO:0007669"/>
    <property type="project" value="UniProtKB-UniRule"/>
</dbReference>
<dbReference type="CDD" id="cd02163">
    <property type="entry name" value="PPAT"/>
    <property type="match status" value="1"/>
</dbReference>
<dbReference type="Gene3D" id="3.40.50.620">
    <property type="entry name" value="HUPs"/>
    <property type="match status" value="1"/>
</dbReference>
<dbReference type="HAMAP" id="MF_00151">
    <property type="entry name" value="PPAT_bact"/>
    <property type="match status" value="1"/>
</dbReference>
<dbReference type="InterPro" id="IPR004821">
    <property type="entry name" value="Cyt_trans-like"/>
</dbReference>
<dbReference type="InterPro" id="IPR001980">
    <property type="entry name" value="PPAT"/>
</dbReference>
<dbReference type="InterPro" id="IPR014729">
    <property type="entry name" value="Rossmann-like_a/b/a_fold"/>
</dbReference>
<dbReference type="NCBIfam" id="TIGR01510">
    <property type="entry name" value="coaD_prev_kdtB"/>
    <property type="match status" value="1"/>
</dbReference>
<dbReference type="NCBIfam" id="TIGR00125">
    <property type="entry name" value="cyt_tran_rel"/>
    <property type="match status" value="1"/>
</dbReference>
<dbReference type="PANTHER" id="PTHR21342">
    <property type="entry name" value="PHOSPHOPANTETHEINE ADENYLYLTRANSFERASE"/>
    <property type="match status" value="1"/>
</dbReference>
<dbReference type="PANTHER" id="PTHR21342:SF1">
    <property type="entry name" value="PHOSPHOPANTETHEINE ADENYLYLTRANSFERASE"/>
    <property type="match status" value="1"/>
</dbReference>
<dbReference type="Pfam" id="PF01467">
    <property type="entry name" value="CTP_transf_like"/>
    <property type="match status" value="1"/>
</dbReference>
<dbReference type="PRINTS" id="PR01020">
    <property type="entry name" value="LPSBIOSNTHSS"/>
</dbReference>
<dbReference type="SUPFAM" id="SSF52374">
    <property type="entry name" value="Nucleotidylyl transferase"/>
    <property type="match status" value="1"/>
</dbReference>
<keyword id="KW-0067">ATP-binding</keyword>
<keyword id="KW-0173">Coenzyme A biosynthesis</keyword>
<keyword id="KW-0963">Cytoplasm</keyword>
<keyword id="KW-0460">Magnesium</keyword>
<keyword id="KW-0547">Nucleotide-binding</keyword>
<keyword id="KW-0548">Nucleotidyltransferase</keyword>
<keyword id="KW-0808">Transferase</keyword>
<gene>
    <name evidence="1" type="primary">coaD</name>
    <name type="ordered locus">CLI_2554</name>
</gene>
<sequence>MKTAVYPGSFDPITKGHLNIIKRASKVCDKLIVAVLVNPEKKGLFSVDERVEMIKRVTKNHSNIEVQCFSGLLIDFMKEKKSKVIIKGLRTMSDFEYEFKMALMNNKLDPNIETVFMMTNAKYSYLSSSSVKQVAMFGGCIKDLVPDEIIPDIKKKINHKKECI</sequence>
<organism>
    <name type="scientific">Clostridium botulinum (strain Langeland / NCTC 10281 / Type F)</name>
    <dbReference type="NCBI Taxonomy" id="441772"/>
    <lineage>
        <taxon>Bacteria</taxon>
        <taxon>Bacillati</taxon>
        <taxon>Bacillota</taxon>
        <taxon>Clostridia</taxon>
        <taxon>Eubacteriales</taxon>
        <taxon>Clostridiaceae</taxon>
        <taxon>Clostridium</taxon>
    </lineage>
</organism>
<proteinExistence type="inferred from homology"/>
<feature type="chain" id="PRO_1000011127" description="Phosphopantetheine adenylyltransferase">
    <location>
        <begin position="1"/>
        <end position="164"/>
    </location>
</feature>
<feature type="binding site" evidence="1">
    <location>
        <begin position="9"/>
        <end position="10"/>
    </location>
    <ligand>
        <name>ATP</name>
        <dbReference type="ChEBI" id="CHEBI:30616"/>
    </ligand>
</feature>
<feature type="binding site" evidence="1">
    <location>
        <position position="9"/>
    </location>
    <ligand>
        <name>substrate</name>
    </ligand>
</feature>
<feature type="binding site" evidence="1">
    <location>
        <position position="17"/>
    </location>
    <ligand>
        <name>ATP</name>
        <dbReference type="ChEBI" id="CHEBI:30616"/>
    </ligand>
</feature>
<feature type="binding site" evidence="1">
    <location>
        <position position="41"/>
    </location>
    <ligand>
        <name>substrate</name>
    </ligand>
</feature>
<feature type="binding site" evidence="1">
    <location>
        <position position="73"/>
    </location>
    <ligand>
        <name>substrate</name>
    </ligand>
</feature>
<feature type="binding site" evidence="1">
    <location>
        <position position="87"/>
    </location>
    <ligand>
        <name>substrate</name>
    </ligand>
</feature>
<feature type="binding site" evidence="1">
    <location>
        <begin position="88"/>
        <end position="90"/>
    </location>
    <ligand>
        <name>ATP</name>
        <dbReference type="ChEBI" id="CHEBI:30616"/>
    </ligand>
</feature>
<feature type="binding site" evidence="1">
    <location>
        <position position="98"/>
    </location>
    <ligand>
        <name>ATP</name>
        <dbReference type="ChEBI" id="CHEBI:30616"/>
    </ligand>
</feature>
<feature type="binding site" evidence="1">
    <location>
        <begin position="123"/>
        <end position="129"/>
    </location>
    <ligand>
        <name>ATP</name>
        <dbReference type="ChEBI" id="CHEBI:30616"/>
    </ligand>
</feature>
<feature type="site" description="Transition state stabilizer" evidence="1">
    <location>
        <position position="17"/>
    </location>
</feature>
<reference key="1">
    <citation type="submission" date="2007-06" db="EMBL/GenBank/DDBJ databases">
        <authorList>
            <person name="Brinkac L.M."/>
            <person name="Daugherty S."/>
            <person name="Dodson R.J."/>
            <person name="Madupu R."/>
            <person name="Brown J.L."/>
            <person name="Bruce D."/>
            <person name="Detter C."/>
            <person name="Munk C."/>
            <person name="Smith L.A."/>
            <person name="Smith T.J."/>
            <person name="White O."/>
            <person name="Brettin T.S."/>
        </authorList>
    </citation>
    <scope>NUCLEOTIDE SEQUENCE [LARGE SCALE GENOMIC DNA]</scope>
    <source>
        <strain>Langeland / NCTC 10281 / Type F</strain>
    </source>
</reference>
<protein>
    <recommendedName>
        <fullName evidence="1">Phosphopantetheine adenylyltransferase</fullName>
        <ecNumber evidence="1">2.7.7.3</ecNumber>
    </recommendedName>
    <alternativeName>
        <fullName evidence="1">Dephospho-CoA pyrophosphorylase</fullName>
    </alternativeName>
    <alternativeName>
        <fullName evidence="1">Pantetheine-phosphate adenylyltransferase</fullName>
        <shortName evidence="1">PPAT</shortName>
    </alternativeName>
</protein>
<evidence type="ECO:0000255" key="1">
    <source>
        <dbReference type="HAMAP-Rule" id="MF_00151"/>
    </source>
</evidence>
<comment type="function">
    <text evidence="1">Reversibly transfers an adenylyl group from ATP to 4'-phosphopantetheine, yielding dephospho-CoA (dPCoA) and pyrophosphate.</text>
</comment>
<comment type="catalytic activity">
    <reaction evidence="1">
        <text>(R)-4'-phosphopantetheine + ATP + H(+) = 3'-dephospho-CoA + diphosphate</text>
        <dbReference type="Rhea" id="RHEA:19801"/>
        <dbReference type="ChEBI" id="CHEBI:15378"/>
        <dbReference type="ChEBI" id="CHEBI:30616"/>
        <dbReference type="ChEBI" id="CHEBI:33019"/>
        <dbReference type="ChEBI" id="CHEBI:57328"/>
        <dbReference type="ChEBI" id="CHEBI:61723"/>
        <dbReference type="EC" id="2.7.7.3"/>
    </reaction>
</comment>
<comment type="cofactor">
    <cofactor evidence="1">
        <name>Mg(2+)</name>
        <dbReference type="ChEBI" id="CHEBI:18420"/>
    </cofactor>
</comment>
<comment type="pathway">
    <text evidence="1">Cofactor biosynthesis; coenzyme A biosynthesis; CoA from (R)-pantothenate: step 4/5.</text>
</comment>
<comment type="subunit">
    <text evidence="1">Homohexamer.</text>
</comment>
<comment type="subcellular location">
    <subcellularLocation>
        <location evidence="1">Cytoplasm</location>
    </subcellularLocation>
</comment>
<comment type="similarity">
    <text evidence="1">Belongs to the bacterial CoaD family.</text>
</comment>